<organism>
    <name type="scientific">Oltmannsiellopsis viridis</name>
    <name type="common">Marine flagellate</name>
    <name type="synonym">Oltmannsiella viridis</name>
    <dbReference type="NCBI Taxonomy" id="51324"/>
    <lineage>
        <taxon>Eukaryota</taxon>
        <taxon>Viridiplantae</taxon>
        <taxon>Chlorophyta</taxon>
        <taxon>Ulvophyceae</taxon>
        <taxon>Oltmannsiellopsidales</taxon>
        <taxon>Oltmannsiellopsidaceae</taxon>
        <taxon>Oltmannsiellopsis</taxon>
    </lineage>
</organism>
<name>YCF4_OLTVI</name>
<gene>
    <name evidence="1" type="primary">ycf4</name>
</gene>
<protein>
    <recommendedName>
        <fullName evidence="1">Photosystem I assembly protein Ycf4</fullName>
    </recommendedName>
</protein>
<sequence length="182" mass="20863">MSEELIRRYSITGSRRFSNYWWSSVIFLGASGFLLTGLSSYLNVNLLPFIHAENIIFFPQGLVMCFYGILGLIFSVYLGLTIFWSVGSGFNEFNKKDGLVRIFRWGFPGKNRRIDLSYALTDVEAIRVELQEGINPRRTIYLCVKGNREIPVTRIGQPMSLEEVETQAAELAKFLQIDLFLK</sequence>
<reference key="1">
    <citation type="journal article" date="2006" name="BMC Biol.">
        <title>The complete chloroplast DNA sequence of the green alga Oltmannsiellopsis viridis reveals a distinctive quadripartite architecture in the chloroplast genome of early diverging ulvophytes.</title>
        <authorList>
            <person name="Pombert J.-F."/>
            <person name="Lemieux C."/>
            <person name="Turmel M."/>
        </authorList>
    </citation>
    <scope>NUCLEOTIDE SEQUENCE [LARGE SCALE GENOMIC DNA]</scope>
</reference>
<geneLocation type="chloroplast"/>
<keyword id="KW-0150">Chloroplast</keyword>
<keyword id="KW-0472">Membrane</keyword>
<keyword id="KW-0602">Photosynthesis</keyword>
<keyword id="KW-0934">Plastid</keyword>
<keyword id="KW-0793">Thylakoid</keyword>
<keyword id="KW-0812">Transmembrane</keyword>
<keyword id="KW-1133">Transmembrane helix</keyword>
<evidence type="ECO:0000255" key="1">
    <source>
        <dbReference type="HAMAP-Rule" id="MF_00437"/>
    </source>
</evidence>
<comment type="function">
    <text evidence="1">Seems to be required for the assembly of the photosystem I complex.</text>
</comment>
<comment type="subcellular location">
    <subcellularLocation>
        <location evidence="1">Plastid</location>
        <location evidence="1">Chloroplast thylakoid membrane</location>
        <topology evidence="1">Multi-pass membrane protein</topology>
    </subcellularLocation>
</comment>
<comment type="similarity">
    <text evidence="1">Belongs to the Ycf4 family.</text>
</comment>
<feature type="chain" id="PRO_0000275664" description="Photosystem I assembly protein Ycf4">
    <location>
        <begin position="1"/>
        <end position="182"/>
    </location>
</feature>
<feature type="transmembrane region" description="Helical" evidence="1">
    <location>
        <begin position="22"/>
        <end position="42"/>
    </location>
</feature>
<feature type="transmembrane region" description="Helical" evidence="1">
    <location>
        <begin position="63"/>
        <end position="83"/>
    </location>
</feature>
<dbReference type="EMBL" id="DQ291132">
    <property type="protein sequence ID" value="ABB81970.1"/>
    <property type="molecule type" value="Genomic_DNA"/>
</dbReference>
<dbReference type="RefSeq" id="YP_635902.1">
    <property type="nucleotide sequence ID" value="NC_008099.1"/>
</dbReference>
<dbReference type="SMR" id="Q20EU3"/>
<dbReference type="GeneID" id="4100088"/>
<dbReference type="GO" id="GO:0009535">
    <property type="term" value="C:chloroplast thylakoid membrane"/>
    <property type="evidence" value="ECO:0007669"/>
    <property type="project" value="UniProtKB-SubCell"/>
</dbReference>
<dbReference type="GO" id="GO:0009522">
    <property type="term" value="C:photosystem I"/>
    <property type="evidence" value="ECO:0007669"/>
    <property type="project" value="InterPro"/>
</dbReference>
<dbReference type="GO" id="GO:0015979">
    <property type="term" value="P:photosynthesis"/>
    <property type="evidence" value="ECO:0007669"/>
    <property type="project" value="UniProtKB-UniRule"/>
</dbReference>
<dbReference type="HAMAP" id="MF_00437">
    <property type="entry name" value="Ycf4"/>
    <property type="match status" value="1"/>
</dbReference>
<dbReference type="InterPro" id="IPR003359">
    <property type="entry name" value="PSI_Ycf4_assembly"/>
</dbReference>
<dbReference type="NCBIfam" id="NF002712">
    <property type="entry name" value="PRK02542.1"/>
    <property type="match status" value="1"/>
</dbReference>
<dbReference type="PANTHER" id="PTHR33288">
    <property type="match status" value="1"/>
</dbReference>
<dbReference type="PANTHER" id="PTHR33288:SF4">
    <property type="entry name" value="PHOTOSYSTEM I ASSEMBLY PROTEIN YCF4"/>
    <property type="match status" value="1"/>
</dbReference>
<dbReference type="Pfam" id="PF02392">
    <property type="entry name" value="Ycf4"/>
    <property type="match status" value="1"/>
</dbReference>
<accession>Q20EU3</accession>
<proteinExistence type="inferred from homology"/>